<sequence>MSLTYRDAGVDIDEGDRLVDLIKPHARPTLRPEVLGGIGGFGGLFALDVKKYREPVLVSGTDGVGTKLKVAFAADRHDTVGIDLVAMCVNDIAVVGAEPLFFLDYYATGKLSAEQGAEVVKGIAEGCRQAGCALIGGETAELPGFYARGEYDLAGFAVGCVDRPRIVDGTRVARGDVVIGIASSGLHSNGFSLARKALLDRYPLDHRFEGLGGRTLADALLEPTRIYAKDVLALLDQVPVRAFAHITGGGLPGNVPRTLPDGTRAVLEEKRWPRPAIFDVVEREGQVPRDEMYRTFNMGLGLVAVVAPGDEAAAHAALRARGLEAWTVGAIEAGGPGEATCEVVR</sequence>
<proteinExistence type="inferred from homology"/>
<feature type="chain" id="PRO_0000258326" description="Phosphoribosylformylglycinamidine cyclo-ligase">
    <location>
        <begin position="1"/>
        <end position="345"/>
    </location>
</feature>
<comment type="catalytic activity">
    <reaction evidence="1">
        <text>2-formamido-N(1)-(5-O-phospho-beta-D-ribosyl)acetamidine + ATP = 5-amino-1-(5-phospho-beta-D-ribosyl)imidazole + ADP + phosphate + H(+)</text>
        <dbReference type="Rhea" id="RHEA:23032"/>
        <dbReference type="ChEBI" id="CHEBI:15378"/>
        <dbReference type="ChEBI" id="CHEBI:30616"/>
        <dbReference type="ChEBI" id="CHEBI:43474"/>
        <dbReference type="ChEBI" id="CHEBI:137981"/>
        <dbReference type="ChEBI" id="CHEBI:147287"/>
        <dbReference type="ChEBI" id="CHEBI:456216"/>
        <dbReference type="EC" id="6.3.3.1"/>
    </reaction>
</comment>
<comment type="pathway">
    <text evidence="1">Purine metabolism; IMP biosynthesis via de novo pathway; 5-amino-1-(5-phospho-D-ribosyl)imidazole from N(2)-formyl-N(1)-(5-phospho-D-ribosyl)glycinamide: step 2/2.</text>
</comment>
<comment type="subcellular location">
    <subcellularLocation>
        <location evidence="1">Cytoplasm</location>
    </subcellularLocation>
</comment>
<comment type="similarity">
    <text evidence="1">Belongs to the AIR synthase family.</text>
</comment>
<name>PUR5_ANADE</name>
<evidence type="ECO:0000255" key="1">
    <source>
        <dbReference type="HAMAP-Rule" id="MF_00741"/>
    </source>
</evidence>
<accession>Q2IQE7</accession>
<organism>
    <name type="scientific">Anaeromyxobacter dehalogenans (strain 2CP-C)</name>
    <dbReference type="NCBI Taxonomy" id="290397"/>
    <lineage>
        <taxon>Bacteria</taxon>
        <taxon>Pseudomonadati</taxon>
        <taxon>Myxococcota</taxon>
        <taxon>Myxococcia</taxon>
        <taxon>Myxococcales</taxon>
        <taxon>Cystobacterineae</taxon>
        <taxon>Anaeromyxobacteraceae</taxon>
        <taxon>Anaeromyxobacter</taxon>
    </lineage>
</organism>
<reference key="1">
    <citation type="submission" date="2006-01" db="EMBL/GenBank/DDBJ databases">
        <title>Complete sequence of Anaeromyxobacter dehalogenans 2CP-C.</title>
        <authorList>
            <person name="Copeland A."/>
            <person name="Lucas S."/>
            <person name="Lapidus A."/>
            <person name="Barry K."/>
            <person name="Detter J.C."/>
            <person name="Glavina T."/>
            <person name="Hammon N."/>
            <person name="Israni S."/>
            <person name="Pitluck S."/>
            <person name="Brettin T."/>
            <person name="Bruce D."/>
            <person name="Han C."/>
            <person name="Tapia R."/>
            <person name="Gilna P."/>
            <person name="Kiss H."/>
            <person name="Schmutz J."/>
            <person name="Larimer F."/>
            <person name="Land M."/>
            <person name="Kyrpides N."/>
            <person name="Anderson I."/>
            <person name="Sanford R.A."/>
            <person name="Ritalahti K.M."/>
            <person name="Thomas H.S."/>
            <person name="Kirby J.R."/>
            <person name="Zhulin I.B."/>
            <person name="Loeffler F.E."/>
            <person name="Richardson P."/>
        </authorList>
    </citation>
    <scope>NUCLEOTIDE SEQUENCE [LARGE SCALE GENOMIC DNA]</scope>
    <source>
        <strain>2CP-C</strain>
    </source>
</reference>
<keyword id="KW-0067">ATP-binding</keyword>
<keyword id="KW-0963">Cytoplasm</keyword>
<keyword id="KW-0436">Ligase</keyword>
<keyword id="KW-0547">Nucleotide-binding</keyword>
<keyword id="KW-0658">Purine biosynthesis</keyword>
<keyword id="KW-1185">Reference proteome</keyword>
<dbReference type="EC" id="6.3.3.1" evidence="1"/>
<dbReference type="EMBL" id="CP000251">
    <property type="protein sequence ID" value="ABC81029.1"/>
    <property type="molecule type" value="Genomic_DNA"/>
</dbReference>
<dbReference type="RefSeq" id="WP_011420312.1">
    <property type="nucleotide sequence ID" value="NC_007760.1"/>
</dbReference>
<dbReference type="SMR" id="Q2IQE7"/>
<dbReference type="STRING" id="290397.Adeh_1255"/>
<dbReference type="KEGG" id="ade:Adeh_1255"/>
<dbReference type="eggNOG" id="COG0150">
    <property type="taxonomic scope" value="Bacteria"/>
</dbReference>
<dbReference type="HOGENOM" id="CLU_047116_0_0_7"/>
<dbReference type="OrthoDB" id="9777881at2"/>
<dbReference type="UniPathway" id="UPA00074">
    <property type="reaction ID" value="UER00129"/>
</dbReference>
<dbReference type="Proteomes" id="UP000001935">
    <property type="component" value="Chromosome"/>
</dbReference>
<dbReference type="GO" id="GO:0005829">
    <property type="term" value="C:cytosol"/>
    <property type="evidence" value="ECO:0007669"/>
    <property type="project" value="TreeGrafter"/>
</dbReference>
<dbReference type="GO" id="GO:0005524">
    <property type="term" value="F:ATP binding"/>
    <property type="evidence" value="ECO:0007669"/>
    <property type="project" value="UniProtKB-KW"/>
</dbReference>
<dbReference type="GO" id="GO:0004637">
    <property type="term" value="F:phosphoribosylamine-glycine ligase activity"/>
    <property type="evidence" value="ECO:0007669"/>
    <property type="project" value="TreeGrafter"/>
</dbReference>
<dbReference type="GO" id="GO:0004641">
    <property type="term" value="F:phosphoribosylformylglycinamidine cyclo-ligase activity"/>
    <property type="evidence" value="ECO:0007669"/>
    <property type="project" value="UniProtKB-UniRule"/>
</dbReference>
<dbReference type="GO" id="GO:0006189">
    <property type="term" value="P:'de novo' IMP biosynthetic process"/>
    <property type="evidence" value="ECO:0007669"/>
    <property type="project" value="UniProtKB-UniRule"/>
</dbReference>
<dbReference type="GO" id="GO:0046084">
    <property type="term" value="P:adenine biosynthetic process"/>
    <property type="evidence" value="ECO:0007669"/>
    <property type="project" value="TreeGrafter"/>
</dbReference>
<dbReference type="CDD" id="cd02196">
    <property type="entry name" value="PurM"/>
    <property type="match status" value="1"/>
</dbReference>
<dbReference type="FunFam" id="3.30.1330.10:FF:000001">
    <property type="entry name" value="Phosphoribosylformylglycinamidine cyclo-ligase"/>
    <property type="match status" value="1"/>
</dbReference>
<dbReference type="FunFam" id="3.90.650.10:FF:000011">
    <property type="entry name" value="Phosphoribosylformylglycinamidine cyclo-ligase"/>
    <property type="match status" value="1"/>
</dbReference>
<dbReference type="Gene3D" id="3.90.650.10">
    <property type="entry name" value="PurM-like C-terminal domain"/>
    <property type="match status" value="1"/>
</dbReference>
<dbReference type="Gene3D" id="3.30.1330.10">
    <property type="entry name" value="PurM-like, N-terminal domain"/>
    <property type="match status" value="1"/>
</dbReference>
<dbReference type="HAMAP" id="MF_00741">
    <property type="entry name" value="AIRS"/>
    <property type="match status" value="1"/>
</dbReference>
<dbReference type="InterPro" id="IPR010918">
    <property type="entry name" value="PurM-like_C_dom"/>
</dbReference>
<dbReference type="InterPro" id="IPR036676">
    <property type="entry name" value="PurM-like_C_sf"/>
</dbReference>
<dbReference type="InterPro" id="IPR016188">
    <property type="entry name" value="PurM-like_N"/>
</dbReference>
<dbReference type="InterPro" id="IPR036921">
    <property type="entry name" value="PurM-like_N_sf"/>
</dbReference>
<dbReference type="InterPro" id="IPR004733">
    <property type="entry name" value="PurM_cligase"/>
</dbReference>
<dbReference type="NCBIfam" id="TIGR00878">
    <property type="entry name" value="purM"/>
    <property type="match status" value="1"/>
</dbReference>
<dbReference type="PANTHER" id="PTHR10520:SF12">
    <property type="entry name" value="TRIFUNCTIONAL PURINE BIOSYNTHETIC PROTEIN ADENOSINE-3"/>
    <property type="match status" value="1"/>
</dbReference>
<dbReference type="PANTHER" id="PTHR10520">
    <property type="entry name" value="TRIFUNCTIONAL PURINE BIOSYNTHETIC PROTEIN ADENOSINE-3-RELATED"/>
    <property type="match status" value="1"/>
</dbReference>
<dbReference type="Pfam" id="PF00586">
    <property type="entry name" value="AIRS"/>
    <property type="match status" value="1"/>
</dbReference>
<dbReference type="Pfam" id="PF02769">
    <property type="entry name" value="AIRS_C"/>
    <property type="match status" value="1"/>
</dbReference>
<dbReference type="SUPFAM" id="SSF56042">
    <property type="entry name" value="PurM C-terminal domain-like"/>
    <property type="match status" value="1"/>
</dbReference>
<dbReference type="SUPFAM" id="SSF55326">
    <property type="entry name" value="PurM N-terminal domain-like"/>
    <property type="match status" value="1"/>
</dbReference>
<gene>
    <name evidence="1" type="primary">purM</name>
    <name type="ordered locus">Adeh_1255</name>
</gene>
<protein>
    <recommendedName>
        <fullName evidence="1">Phosphoribosylformylglycinamidine cyclo-ligase</fullName>
        <ecNumber evidence="1">6.3.3.1</ecNumber>
    </recommendedName>
    <alternativeName>
        <fullName evidence="1">AIR synthase</fullName>
    </alternativeName>
    <alternativeName>
        <fullName evidence="1">AIRS</fullName>
    </alternativeName>
    <alternativeName>
        <fullName evidence="1">Phosphoribosyl-aminoimidazole synthetase</fullName>
    </alternativeName>
</protein>